<dbReference type="EC" id="4.1.1.32" evidence="1"/>
<dbReference type="EMBL" id="AE009950">
    <property type="protein sequence ID" value="AAL80413.1"/>
    <property type="molecule type" value="Genomic_DNA"/>
</dbReference>
<dbReference type="RefSeq" id="WP_011011403.1">
    <property type="nucleotide sequence ID" value="NZ_CP023154.1"/>
</dbReference>
<dbReference type="SMR" id="Q8U410"/>
<dbReference type="STRING" id="186497.PF0289"/>
<dbReference type="PaxDb" id="186497-PF0289"/>
<dbReference type="KEGG" id="pfu:PF0289"/>
<dbReference type="PATRIC" id="fig|186497.12.peg.301"/>
<dbReference type="eggNOG" id="arCOG05865">
    <property type="taxonomic scope" value="Archaea"/>
</dbReference>
<dbReference type="HOGENOM" id="CLU_028872_1_1_2"/>
<dbReference type="OrthoDB" id="55875at2157"/>
<dbReference type="PhylomeDB" id="Q8U410"/>
<dbReference type="UniPathway" id="UPA00138"/>
<dbReference type="Proteomes" id="UP000001013">
    <property type="component" value="Chromosome"/>
</dbReference>
<dbReference type="GO" id="GO:0005829">
    <property type="term" value="C:cytosol"/>
    <property type="evidence" value="ECO:0007669"/>
    <property type="project" value="TreeGrafter"/>
</dbReference>
<dbReference type="GO" id="GO:0005525">
    <property type="term" value="F:GTP binding"/>
    <property type="evidence" value="ECO:0007669"/>
    <property type="project" value="UniProtKB-UniRule"/>
</dbReference>
<dbReference type="GO" id="GO:0030145">
    <property type="term" value="F:manganese ion binding"/>
    <property type="evidence" value="ECO:0007669"/>
    <property type="project" value="UniProtKB-UniRule"/>
</dbReference>
<dbReference type="GO" id="GO:0004613">
    <property type="term" value="F:phosphoenolpyruvate carboxykinase (GTP) activity"/>
    <property type="evidence" value="ECO:0007669"/>
    <property type="project" value="UniProtKB-UniRule"/>
</dbReference>
<dbReference type="GO" id="GO:0071333">
    <property type="term" value="P:cellular response to glucose stimulus"/>
    <property type="evidence" value="ECO:0007669"/>
    <property type="project" value="TreeGrafter"/>
</dbReference>
<dbReference type="GO" id="GO:0006094">
    <property type="term" value="P:gluconeogenesis"/>
    <property type="evidence" value="ECO:0007669"/>
    <property type="project" value="UniProtKB-UniRule"/>
</dbReference>
<dbReference type="GO" id="GO:0046327">
    <property type="term" value="P:glycerol biosynthetic process from pyruvate"/>
    <property type="evidence" value="ECO:0007669"/>
    <property type="project" value="TreeGrafter"/>
</dbReference>
<dbReference type="GO" id="GO:0006107">
    <property type="term" value="P:oxaloacetate metabolic process"/>
    <property type="evidence" value="ECO:0007669"/>
    <property type="project" value="TreeGrafter"/>
</dbReference>
<dbReference type="GO" id="GO:0019543">
    <property type="term" value="P:propionate catabolic process"/>
    <property type="evidence" value="ECO:0007669"/>
    <property type="project" value="TreeGrafter"/>
</dbReference>
<dbReference type="GO" id="GO:0033993">
    <property type="term" value="P:response to lipid"/>
    <property type="evidence" value="ECO:0007669"/>
    <property type="project" value="TreeGrafter"/>
</dbReference>
<dbReference type="GO" id="GO:0042594">
    <property type="term" value="P:response to starvation"/>
    <property type="evidence" value="ECO:0007669"/>
    <property type="project" value="TreeGrafter"/>
</dbReference>
<dbReference type="CDD" id="cd00819">
    <property type="entry name" value="PEPCK_GTP"/>
    <property type="match status" value="1"/>
</dbReference>
<dbReference type="FunFam" id="3.40.449.10:FF:000010">
    <property type="entry name" value="Phosphoenolpyruvate carboxykinase [GTP]"/>
    <property type="match status" value="1"/>
</dbReference>
<dbReference type="Gene3D" id="3.90.228.20">
    <property type="match status" value="1"/>
</dbReference>
<dbReference type="Gene3D" id="3.40.449.10">
    <property type="entry name" value="Phosphoenolpyruvate Carboxykinase, domain 1"/>
    <property type="match status" value="1"/>
</dbReference>
<dbReference type="Gene3D" id="2.170.8.10">
    <property type="entry name" value="Phosphoenolpyruvate Carboxykinase, domain 2"/>
    <property type="match status" value="1"/>
</dbReference>
<dbReference type="HAMAP" id="MF_00452">
    <property type="entry name" value="PEPCK_GTP"/>
    <property type="match status" value="1"/>
</dbReference>
<dbReference type="InterPro" id="IPR018091">
    <property type="entry name" value="PEP_carboxykin_GTP_CS"/>
</dbReference>
<dbReference type="InterPro" id="IPR013035">
    <property type="entry name" value="PEP_carboxykinase_C"/>
</dbReference>
<dbReference type="InterPro" id="IPR008209">
    <property type="entry name" value="PEP_carboxykinase_GTP"/>
</dbReference>
<dbReference type="InterPro" id="IPR035077">
    <property type="entry name" value="PEP_carboxykinase_GTP_C"/>
</dbReference>
<dbReference type="InterPro" id="IPR035078">
    <property type="entry name" value="PEP_carboxykinase_GTP_N"/>
</dbReference>
<dbReference type="InterPro" id="IPR008210">
    <property type="entry name" value="PEP_carboxykinase_N"/>
</dbReference>
<dbReference type="NCBIfam" id="NF003253">
    <property type="entry name" value="PRK04210.1"/>
    <property type="match status" value="1"/>
</dbReference>
<dbReference type="PANTHER" id="PTHR11561">
    <property type="entry name" value="PHOSPHOENOLPYRUVATE CARBOXYKINASE"/>
    <property type="match status" value="1"/>
</dbReference>
<dbReference type="PANTHER" id="PTHR11561:SF0">
    <property type="entry name" value="PHOSPHOENOLPYRUVATE CARBOXYKINASE [GTP]-RELATED"/>
    <property type="match status" value="1"/>
</dbReference>
<dbReference type="Pfam" id="PF00821">
    <property type="entry name" value="PEPCK_GTP"/>
    <property type="match status" value="1"/>
</dbReference>
<dbReference type="Pfam" id="PF17297">
    <property type="entry name" value="PEPCK_N"/>
    <property type="match status" value="1"/>
</dbReference>
<dbReference type="PIRSF" id="PIRSF001348">
    <property type="entry name" value="PEP_carboxykinase_GTP"/>
    <property type="match status" value="1"/>
</dbReference>
<dbReference type="SUPFAM" id="SSF68923">
    <property type="entry name" value="PEP carboxykinase N-terminal domain"/>
    <property type="match status" value="1"/>
</dbReference>
<dbReference type="SUPFAM" id="SSF53795">
    <property type="entry name" value="PEP carboxykinase-like"/>
    <property type="match status" value="1"/>
</dbReference>
<dbReference type="PROSITE" id="PS00505">
    <property type="entry name" value="PEPCK_GTP"/>
    <property type="match status" value="1"/>
</dbReference>
<sequence length="624" mass="72665">MMNEALKKLEELLDKDQFEKIKAINNPYLHSFLAEWIQWLEPSKVYVCTDSEEDEEYVRWKALYYGEERMLEMVRHTVHYDNYYDQARDKQNTKLLVPKGTNLPFLNTMDREDGLREIREIMKGIMRGKELFIGFFVLGPKNSVFTIPAVQLTDSAYVMHSEFLLYRKGYEEFKRLGPTKNFLKFVHSAGELDERKTSKNLDKRRIYIDLVDETVYSANTQYGGNVIGLKKLAFRLTIQRAVREGWLSEHMFLMRVNGPNGRKTYFTGAYPSMCGKTSTAMIPWENIVGDDLVFIKNLDGVARAVNVEIGVFGIIEGINQKDDPIIWQVLHSPVEIIFSNVLVKDGKPYWNGMGIEIPDEGENHSGKWWRGKRDAEGKEIPPSHKNARFTVRLEAFPNLDREALENPCGVEVGGMIFGGRDPDTWPPVRESFNWDHGVITMGAALESETTAATLGKEGVRAFNPMSILDFLSVHIGDYLRNYLEFGRKLKKTPKIFAVNYFLRENGQWLNEKLDKAVWLKWMELRVHNDVGAIETPIGYIPRYEDLKVLFRQVLNKDYSREDYEKQFKIRVPELLAKIDRIWKIYEPIDNIPEELFQELEKERKRILEAREKYGDYISPFALEK</sequence>
<protein>
    <recommendedName>
        <fullName evidence="1">Phosphoenolpyruvate carboxykinase [GTP]</fullName>
        <shortName evidence="1">PEP carboxykinase</shortName>
        <shortName evidence="1">PEPCK</shortName>
        <ecNumber evidence="1">4.1.1.32</ecNumber>
    </recommendedName>
</protein>
<keyword id="KW-0963">Cytoplasm</keyword>
<keyword id="KW-0210">Decarboxylase</keyword>
<keyword id="KW-0312">Gluconeogenesis</keyword>
<keyword id="KW-0342">GTP-binding</keyword>
<keyword id="KW-0456">Lyase</keyword>
<keyword id="KW-0464">Manganese</keyword>
<keyword id="KW-0479">Metal-binding</keyword>
<keyword id="KW-0547">Nucleotide-binding</keyword>
<keyword id="KW-1185">Reference proteome</keyword>
<gene>
    <name evidence="1" type="primary">pckG</name>
    <name type="ordered locus">PF0289</name>
</gene>
<proteinExistence type="inferred from homology"/>
<reference key="1">
    <citation type="journal article" date="1999" name="Genetics">
        <title>Divergence of the hyperthermophilic archaea Pyrococcus furiosus and P. horikoshii inferred from complete genomic sequences.</title>
        <authorList>
            <person name="Maeder D.L."/>
            <person name="Weiss R.B."/>
            <person name="Dunn D.M."/>
            <person name="Cherry J.L."/>
            <person name="Gonzalez J.M."/>
            <person name="DiRuggiero J."/>
            <person name="Robb F.T."/>
        </authorList>
    </citation>
    <scope>NUCLEOTIDE SEQUENCE [LARGE SCALE GENOMIC DNA]</scope>
    <source>
        <strain>ATCC 43587 / DSM 3638 / JCM 8422 / Vc1</strain>
    </source>
</reference>
<organism>
    <name type="scientific">Pyrococcus furiosus (strain ATCC 43587 / DSM 3638 / JCM 8422 / Vc1)</name>
    <dbReference type="NCBI Taxonomy" id="186497"/>
    <lineage>
        <taxon>Archaea</taxon>
        <taxon>Methanobacteriati</taxon>
        <taxon>Methanobacteriota</taxon>
        <taxon>Thermococci</taxon>
        <taxon>Thermococcales</taxon>
        <taxon>Thermococcaceae</taxon>
        <taxon>Pyrococcus</taxon>
    </lineage>
</organism>
<feature type="chain" id="PRO_0000103618" description="Phosphoenolpyruvate carboxykinase [GTP]">
    <location>
        <begin position="1"/>
        <end position="624"/>
    </location>
</feature>
<feature type="active site" evidence="1">
    <location>
        <position position="274"/>
    </location>
</feature>
<feature type="binding site" evidence="1">
    <location>
        <position position="88"/>
    </location>
    <ligand>
        <name>substrate</name>
    </ligand>
</feature>
<feature type="binding site" evidence="1">
    <location>
        <begin position="222"/>
        <end position="224"/>
    </location>
    <ligand>
        <name>substrate</name>
    </ligand>
</feature>
<feature type="binding site" evidence="1">
    <location>
        <position position="231"/>
    </location>
    <ligand>
        <name>Mn(2+)</name>
        <dbReference type="ChEBI" id="CHEBI:29035"/>
    </ligand>
</feature>
<feature type="binding site" evidence="1">
    <location>
        <position position="250"/>
    </location>
    <ligand>
        <name>Mn(2+)</name>
        <dbReference type="ChEBI" id="CHEBI:29035"/>
    </ligand>
</feature>
<feature type="binding site" evidence="1">
    <location>
        <position position="272"/>
    </location>
    <ligand>
        <name>substrate</name>
    </ligand>
</feature>
<feature type="binding site" evidence="1">
    <location>
        <begin position="273"/>
        <end position="278"/>
    </location>
    <ligand>
        <name>GTP</name>
        <dbReference type="ChEBI" id="CHEBI:37565"/>
    </ligand>
</feature>
<feature type="binding site" evidence="1">
    <location>
        <position position="291"/>
    </location>
    <ligand>
        <name>Mn(2+)</name>
        <dbReference type="ChEBI" id="CHEBI:29035"/>
    </ligand>
</feature>
<feature type="binding site" evidence="1">
    <location>
        <begin position="386"/>
        <end position="388"/>
    </location>
    <ligand>
        <name>substrate</name>
    </ligand>
</feature>
<feature type="binding site" evidence="1">
    <location>
        <position position="388"/>
    </location>
    <ligand>
        <name>GTP</name>
        <dbReference type="ChEBI" id="CHEBI:37565"/>
    </ligand>
</feature>
<feature type="binding site" evidence="1">
    <location>
        <position position="420"/>
    </location>
    <ligand>
        <name>GTP</name>
        <dbReference type="ChEBI" id="CHEBI:37565"/>
    </ligand>
</feature>
<name>PCKG_PYRFU</name>
<comment type="function">
    <text evidence="1">Catalyzes the conversion of oxaloacetate (OAA) to phosphoenolpyruvate (PEP), the rate-limiting step in the metabolic pathway that produces glucose from lactate and other precursors derived from the citric acid cycle.</text>
</comment>
<comment type="catalytic activity">
    <reaction evidence="1">
        <text>oxaloacetate + GTP = phosphoenolpyruvate + GDP + CO2</text>
        <dbReference type="Rhea" id="RHEA:10388"/>
        <dbReference type="ChEBI" id="CHEBI:16452"/>
        <dbReference type="ChEBI" id="CHEBI:16526"/>
        <dbReference type="ChEBI" id="CHEBI:37565"/>
        <dbReference type="ChEBI" id="CHEBI:58189"/>
        <dbReference type="ChEBI" id="CHEBI:58702"/>
        <dbReference type="EC" id="4.1.1.32"/>
    </reaction>
</comment>
<comment type="cofactor">
    <cofactor evidence="1">
        <name>Mn(2+)</name>
        <dbReference type="ChEBI" id="CHEBI:29035"/>
    </cofactor>
    <text evidence="1">Binds 1 Mn(2+) ion per subunit.</text>
</comment>
<comment type="pathway">
    <text evidence="1">Carbohydrate biosynthesis; gluconeogenesis.</text>
</comment>
<comment type="subcellular location">
    <subcellularLocation>
        <location evidence="1">Cytoplasm</location>
    </subcellularLocation>
</comment>
<comment type="similarity">
    <text evidence="1">Belongs to the phosphoenolpyruvate carboxykinase [GTP] family.</text>
</comment>
<evidence type="ECO:0000255" key="1">
    <source>
        <dbReference type="HAMAP-Rule" id="MF_00452"/>
    </source>
</evidence>
<accession>Q8U410</accession>